<reference key="1">
    <citation type="journal article" date="2002" name="Proc. Natl. Acad. Sci. U.S.A.">
        <title>Complete genome sequence of Clostridium perfringens, an anaerobic flesh-eater.</title>
        <authorList>
            <person name="Shimizu T."/>
            <person name="Ohtani K."/>
            <person name="Hirakawa H."/>
            <person name="Ohshima K."/>
            <person name="Yamashita A."/>
            <person name="Shiba T."/>
            <person name="Ogasawara N."/>
            <person name="Hattori M."/>
            <person name="Kuhara S."/>
            <person name="Hayashi H."/>
        </authorList>
    </citation>
    <scope>NUCLEOTIDE SEQUENCE [LARGE SCALE GENOMIC DNA]</scope>
    <source>
        <strain>13 / Type A</strain>
    </source>
</reference>
<keyword id="KW-0328">Glycosyltransferase</keyword>
<keyword id="KW-0479">Metal-binding</keyword>
<keyword id="KW-0671">Queuosine biosynthesis</keyword>
<keyword id="KW-1185">Reference proteome</keyword>
<keyword id="KW-0808">Transferase</keyword>
<keyword id="KW-0819">tRNA processing</keyword>
<keyword id="KW-0862">Zinc</keyword>
<organism>
    <name type="scientific">Clostridium perfringens (strain 13 / Type A)</name>
    <dbReference type="NCBI Taxonomy" id="195102"/>
    <lineage>
        <taxon>Bacteria</taxon>
        <taxon>Bacillati</taxon>
        <taxon>Bacillota</taxon>
        <taxon>Clostridia</taxon>
        <taxon>Eubacteriales</taxon>
        <taxon>Clostridiaceae</taxon>
        <taxon>Clostridium</taxon>
    </lineage>
</organism>
<sequence>MTKKRYTLLKKDGKARRGEFVTPHGTIQTPIFMNVGTLAAIKGAVSSMDLKEIGCQVELSNTYHLHLRPGDKIVKQMGGLHNFMNWDRPILTDSGGFQVFSLAGMRKIKEEGVYFNSHIDGRKIFMGPEESMQIQSNLGSTIAMAFDECIPNPSTREYVEKSVARTTRWLERCKKEMDRLNSLDDTVNKEQMLFGINQGGVYEDIRIEHAKTIREMDLDGYAIGGLAVGETHEEMYRVIDAVVPHLPEDKPIYLMGVGLPSNILEAVERGVDFFDCVLPARNGRHGHVFTKEGKINLMNAKFELDARPIDEGCQCPACKNYTRAYIRHLFKAKEMLAMRLCVLHNLYFYNKLMEDIRDAIDGGYFAEFKAKKLEEWNGRA</sequence>
<accession>Q8XJ16</accession>
<gene>
    <name evidence="1" type="primary">tgt</name>
    <name type="ordered locus">CPE1945</name>
</gene>
<feature type="chain" id="PRO_0000135468" description="Queuine tRNA-ribosyltransferase">
    <location>
        <begin position="1"/>
        <end position="380"/>
    </location>
</feature>
<feature type="region of interest" description="RNA binding" evidence="1">
    <location>
        <begin position="256"/>
        <end position="262"/>
    </location>
</feature>
<feature type="region of interest" description="RNA binding; important for wobble base 34 recognition" evidence="1">
    <location>
        <begin position="280"/>
        <end position="284"/>
    </location>
</feature>
<feature type="active site" description="Proton acceptor" evidence="1">
    <location>
        <position position="93"/>
    </location>
</feature>
<feature type="active site" description="Nucleophile" evidence="1">
    <location>
        <position position="275"/>
    </location>
</feature>
<feature type="binding site" evidence="1">
    <location>
        <begin position="93"/>
        <end position="97"/>
    </location>
    <ligand>
        <name>substrate</name>
    </ligand>
</feature>
<feature type="binding site" evidence="1">
    <location>
        <position position="147"/>
    </location>
    <ligand>
        <name>substrate</name>
    </ligand>
</feature>
<feature type="binding site" evidence="1">
    <location>
        <position position="198"/>
    </location>
    <ligand>
        <name>substrate</name>
    </ligand>
</feature>
<feature type="binding site" evidence="1">
    <location>
        <position position="225"/>
    </location>
    <ligand>
        <name>substrate</name>
    </ligand>
</feature>
<feature type="binding site" evidence="1">
    <location>
        <position position="313"/>
    </location>
    <ligand>
        <name>Zn(2+)</name>
        <dbReference type="ChEBI" id="CHEBI:29105"/>
    </ligand>
</feature>
<feature type="binding site" evidence="1">
    <location>
        <position position="315"/>
    </location>
    <ligand>
        <name>Zn(2+)</name>
        <dbReference type="ChEBI" id="CHEBI:29105"/>
    </ligand>
</feature>
<feature type="binding site" evidence="1">
    <location>
        <position position="318"/>
    </location>
    <ligand>
        <name>Zn(2+)</name>
        <dbReference type="ChEBI" id="CHEBI:29105"/>
    </ligand>
</feature>
<feature type="binding site" evidence="1">
    <location>
        <position position="344"/>
    </location>
    <ligand>
        <name>Zn(2+)</name>
        <dbReference type="ChEBI" id="CHEBI:29105"/>
    </ligand>
</feature>
<comment type="function">
    <text evidence="1">Catalyzes the base-exchange of a guanine (G) residue with the queuine precursor 7-aminomethyl-7-deazaguanine (PreQ1) at position 34 (anticodon wobble position) in tRNAs with GU(N) anticodons (tRNA-Asp, -Asn, -His and -Tyr). Catalysis occurs through a double-displacement mechanism. The nucleophile active site attacks the C1' of nucleotide 34 to detach the guanine base from the RNA, forming a covalent enzyme-RNA intermediate. The proton acceptor active site deprotonates the incoming PreQ1, allowing a nucleophilic attack on the C1' of the ribose to form the product. After dissociation, two additional enzymatic reactions on the tRNA convert PreQ1 to queuine (Q), resulting in the hypermodified nucleoside queuosine (7-(((4,5-cis-dihydroxy-2-cyclopenten-1-yl)amino)methyl)-7-deazaguanosine).</text>
</comment>
<comment type="catalytic activity">
    <reaction evidence="1">
        <text>7-aminomethyl-7-carbaguanine + guanosine(34) in tRNA = 7-aminomethyl-7-carbaguanosine(34) in tRNA + guanine</text>
        <dbReference type="Rhea" id="RHEA:24104"/>
        <dbReference type="Rhea" id="RHEA-COMP:10341"/>
        <dbReference type="Rhea" id="RHEA-COMP:10342"/>
        <dbReference type="ChEBI" id="CHEBI:16235"/>
        <dbReference type="ChEBI" id="CHEBI:58703"/>
        <dbReference type="ChEBI" id="CHEBI:74269"/>
        <dbReference type="ChEBI" id="CHEBI:82833"/>
        <dbReference type="EC" id="2.4.2.29"/>
    </reaction>
</comment>
<comment type="cofactor">
    <cofactor evidence="1">
        <name>Zn(2+)</name>
        <dbReference type="ChEBI" id="CHEBI:29105"/>
    </cofactor>
    <text evidence="1">Binds 1 zinc ion per subunit.</text>
</comment>
<comment type="pathway">
    <text evidence="1">tRNA modification; tRNA-queuosine biosynthesis.</text>
</comment>
<comment type="subunit">
    <text evidence="1">Homodimer. Within each dimer, one monomer is responsible for RNA recognition and catalysis, while the other monomer binds to the replacement base PreQ1.</text>
</comment>
<comment type="similarity">
    <text evidence="1">Belongs to the queuine tRNA-ribosyltransferase family.</text>
</comment>
<protein>
    <recommendedName>
        <fullName evidence="1">Queuine tRNA-ribosyltransferase</fullName>
        <ecNumber evidence="1">2.4.2.29</ecNumber>
    </recommendedName>
    <alternativeName>
        <fullName evidence="1">Guanine insertion enzyme</fullName>
    </alternativeName>
    <alternativeName>
        <fullName evidence="1">tRNA-guanine transglycosylase</fullName>
    </alternativeName>
</protein>
<name>TGT_CLOPE</name>
<dbReference type="EC" id="2.4.2.29" evidence="1"/>
<dbReference type="EMBL" id="BA000016">
    <property type="protein sequence ID" value="BAB81651.1"/>
    <property type="molecule type" value="Genomic_DNA"/>
</dbReference>
<dbReference type="RefSeq" id="WP_011010699.1">
    <property type="nucleotide sequence ID" value="NC_003366.1"/>
</dbReference>
<dbReference type="SMR" id="Q8XJ16"/>
<dbReference type="STRING" id="195102.gene:10491214"/>
<dbReference type="KEGG" id="cpe:CPE1945"/>
<dbReference type="HOGENOM" id="CLU_022060_0_1_9"/>
<dbReference type="UniPathway" id="UPA00392"/>
<dbReference type="Proteomes" id="UP000000818">
    <property type="component" value="Chromosome"/>
</dbReference>
<dbReference type="GO" id="GO:0005829">
    <property type="term" value="C:cytosol"/>
    <property type="evidence" value="ECO:0007669"/>
    <property type="project" value="TreeGrafter"/>
</dbReference>
<dbReference type="GO" id="GO:0046872">
    <property type="term" value="F:metal ion binding"/>
    <property type="evidence" value="ECO:0007669"/>
    <property type="project" value="UniProtKB-KW"/>
</dbReference>
<dbReference type="GO" id="GO:0008479">
    <property type="term" value="F:tRNA-guanosine(34) queuine transglycosylase activity"/>
    <property type="evidence" value="ECO:0007669"/>
    <property type="project" value="UniProtKB-UniRule"/>
</dbReference>
<dbReference type="GO" id="GO:0008616">
    <property type="term" value="P:queuosine biosynthetic process"/>
    <property type="evidence" value="ECO:0007669"/>
    <property type="project" value="UniProtKB-UniRule"/>
</dbReference>
<dbReference type="GO" id="GO:0002099">
    <property type="term" value="P:tRNA wobble guanine modification"/>
    <property type="evidence" value="ECO:0007669"/>
    <property type="project" value="TreeGrafter"/>
</dbReference>
<dbReference type="GO" id="GO:0101030">
    <property type="term" value="P:tRNA-guanine transglycosylation"/>
    <property type="evidence" value="ECO:0007669"/>
    <property type="project" value="InterPro"/>
</dbReference>
<dbReference type="FunFam" id="3.20.20.105:FF:000001">
    <property type="entry name" value="Queuine tRNA-ribosyltransferase"/>
    <property type="match status" value="1"/>
</dbReference>
<dbReference type="Gene3D" id="3.20.20.105">
    <property type="entry name" value="Queuine tRNA-ribosyltransferase-like"/>
    <property type="match status" value="1"/>
</dbReference>
<dbReference type="HAMAP" id="MF_00168">
    <property type="entry name" value="Q_tRNA_Tgt"/>
    <property type="match status" value="1"/>
</dbReference>
<dbReference type="InterPro" id="IPR050076">
    <property type="entry name" value="ArchSynthase1/Queuine_TRR"/>
</dbReference>
<dbReference type="InterPro" id="IPR004803">
    <property type="entry name" value="TGT"/>
</dbReference>
<dbReference type="InterPro" id="IPR036511">
    <property type="entry name" value="TGT-like_sf"/>
</dbReference>
<dbReference type="InterPro" id="IPR002616">
    <property type="entry name" value="tRNA_ribo_trans-like"/>
</dbReference>
<dbReference type="NCBIfam" id="TIGR00430">
    <property type="entry name" value="Q_tRNA_tgt"/>
    <property type="match status" value="1"/>
</dbReference>
<dbReference type="NCBIfam" id="TIGR00449">
    <property type="entry name" value="tgt_general"/>
    <property type="match status" value="1"/>
</dbReference>
<dbReference type="PANTHER" id="PTHR46499">
    <property type="entry name" value="QUEUINE TRNA-RIBOSYLTRANSFERASE"/>
    <property type="match status" value="1"/>
</dbReference>
<dbReference type="PANTHER" id="PTHR46499:SF1">
    <property type="entry name" value="QUEUINE TRNA-RIBOSYLTRANSFERASE"/>
    <property type="match status" value="1"/>
</dbReference>
<dbReference type="Pfam" id="PF01702">
    <property type="entry name" value="TGT"/>
    <property type="match status" value="1"/>
</dbReference>
<dbReference type="SUPFAM" id="SSF51713">
    <property type="entry name" value="tRNA-guanine transglycosylase"/>
    <property type="match status" value="1"/>
</dbReference>
<proteinExistence type="inferred from homology"/>
<evidence type="ECO:0000255" key="1">
    <source>
        <dbReference type="HAMAP-Rule" id="MF_00168"/>
    </source>
</evidence>